<feature type="chain" id="PRO_1000095534" description="Histidine--tRNA ligase">
    <location>
        <begin position="1"/>
        <end position="446"/>
    </location>
</feature>
<protein>
    <recommendedName>
        <fullName evidence="1">Histidine--tRNA ligase</fullName>
        <ecNumber evidence="1">6.1.1.21</ecNumber>
    </recommendedName>
    <alternativeName>
        <fullName evidence="1">Histidyl-tRNA synthetase</fullName>
        <shortName evidence="1">HisRS</shortName>
    </alternativeName>
</protein>
<proteinExistence type="inferred from homology"/>
<name>SYH_PARP8</name>
<evidence type="ECO:0000255" key="1">
    <source>
        <dbReference type="HAMAP-Rule" id="MF_00127"/>
    </source>
</evidence>
<comment type="catalytic activity">
    <reaction evidence="1">
        <text>tRNA(His) + L-histidine + ATP = L-histidyl-tRNA(His) + AMP + diphosphate + H(+)</text>
        <dbReference type="Rhea" id="RHEA:17313"/>
        <dbReference type="Rhea" id="RHEA-COMP:9665"/>
        <dbReference type="Rhea" id="RHEA-COMP:9689"/>
        <dbReference type="ChEBI" id="CHEBI:15378"/>
        <dbReference type="ChEBI" id="CHEBI:30616"/>
        <dbReference type="ChEBI" id="CHEBI:33019"/>
        <dbReference type="ChEBI" id="CHEBI:57595"/>
        <dbReference type="ChEBI" id="CHEBI:78442"/>
        <dbReference type="ChEBI" id="CHEBI:78527"/>
        <dbReference type="ChEBI" id="CHEBI:456215"/>
        <dbReference type="EC" id="6.1.1.21"/>
    </reaction>
</comment>
<comment type="subunit">
    <text evidence="1">Homodimer.</text>
</comment>
<comment type="subcellular location">
    <subcellularLocation>
        <location evidence="1">Cytoplasm</location>
    </subcellularLocation>
</comment>
<comment type="similarity">
    <text evidence="1">Belongs to the class-II aminoacyl-tRNA synthetase family.</text>
</comment>
<keyword id="KW-0030">Aminoacyl-tRNA synthetase</keyword>
<keyword id="KW-0067">ATP-binding</keyword>
<keyword id="KW-0963">Cytoplasm</keyword>
<keyword id="KW-0436">Ligase</keyword>
<keyword id="KW-0547">Nucleotide-binding</keyword>
<keyword id="KW-0648">Protein biosynthesis</keyword>
<keyword id="KW-1185">Reference proteome</keyword>
<gene>
    <name evidence="1" type="primary">hisS</name>
    <name type="ordered locus">Bphy_1419</name>
</gene>
<sequence>MTEQKKRLEKLSGVKGMNDILPQDAGLWEFFETTVKSMLRSYGYQNIRTPIVEHTQLFTRGIGEVTDIVEKEMYSFTDALNGENLTMRPENTAAVVRASIEHNMLYDGPKRLWYIGPMFRHERPQRGRYRQFHQVGVEALGFAGPDTDAEIILMCQRLWDDLGLTGIKLEINSLGLAEERAKHRVELIAYLEKHMDVLDEDAKRRLYTNPLRVLDTKNPALQAVAQNAPKLIDFLGDESRAHFEGLQRILKANNIPFTINPRLVRGLDYYNLTVFEWVTDKLGAQGTVAAGGRYDPLIEQLGGKPTAACGWAMGIERILELLKEENLVPENEGCDVYVAHQGEAARDQAFIVAERLRDTGLDVILHCSPDGQASSFKSQMKRADASGAAFAVILGEDEIANGTAGVKALRDSSQSNGKSEQQTVPLEDLTEYLINAMVASTEDGDD</sequence>
<accession>B2JIV0</accession>
<organism>
    <name type="scientific">Paraburkholderia phymatum (strain DSM 17167 / CIP 108236 / LMG 21445 / STM815)</name>
    <name type="common">Burkholderia phymatum</name>
    <dbReference type="NCBI Taxonomy" id="391038"/>
    <lineage>
        <taxon>Bacteria</taxon>
        <taxon>Pseudomonadati</taxon>
        <taxon>Pseudomonadota</taxon>
        <taxon>Betaproteobacteria</taxon>
        <taxon>Burkholderiales</taxon>
        <taxon>Burkholderiaceae</taxon>
        <taxon>Paraburkholderia</taxon>
    </lineage>
</organism>
<dbReference type="EC" id="6.1.1.21" evidence="1"/>
<dbReference type="EMBL" id="CP001043">
    <property type="protein sequence ID" value="ACC70601.1"/>
    <property type="molecule type" value="Genomic_DNA"/>
</dbReference>
<dbReference type="RefSeq" id="WP_012400814.1">
    <property type="nucleotide sequence ID" value="NC_010622.1"/>
</dbReference>
<dbReference type="SMR" id="B2JIV0"/>
<dbReference type="STRING" id="391038.Bphy_1419"/>
<dbReference type="KEGG" id="bph:Bphy_1419"/>
<dbReference type="eggNOG" id="COG0124">
    <property type="taxonomic scope" value="Bacteria"/>
</dbReference>
<dbReference type="HOGENOM" id="CLU_025113_1_1_4"/>
<dbReference type="OrthoDB" id="9800814at2"/>
<dbReference type="Proteomes" id="UP000001192">
    <property type="component" value="Chromosome 1"/>
</dbReference>
<dbReference type="GO" id="GO:0005737">
    <property type="term" value="C:cytoplasm"/>
    <property type="evidence" value="ECO:0007669"/>
    <property type="project" value="UniProtKB-SubCell"/>
</dbReference>
<dbReference type="GO" id="GO:0005524">
    <property type="term" value="F:ATP binding"/>
    <property type="evidence" value="ECO:0007669"/>
    <property type="project" value="UniProtKB-UniRule"/>
</dbReference>
<dbReference type="GO" id="GO:0004821">
    <property type="term" value="F:histidine-tRNA ligase activity"/>
    <property type="evidence" value="ECO:0007669"/>
    <property type="project" value="UniProtKB-UniRule"/>
</dbReference>
<dbReference type="GO" id="GO:0006427">
    <property type="term" value="P:histidyl-tRNA aminoacylation"/>
    <property type="evidence" value="ECO:0007669"/>
    <property type="project" value="UniProtKB-UniRule"/>
</dbReference>
<dbReference type="CDD" id="cd00773">
    <property type="entry name" value="HisRS-like_core"/>
    <property type="match status" value="1"/>
</dbReference>
<dbReference type="CDD" id="cd00859">
    <property type="entry name" value="HisRS_anticodon"/>
    <property type="match status" value="1"/>
</dbReference>
<dbReference type="FunFam" id="3.30.930.10:FF:000005">
    <property type="entry name" value="Histidine--tRNA ligase"/>
    <property type="match status" value="1"/>
</dbReference>
<dbReference type="Gene3D" id="3.40.50.800">
    <property type="entry name" value="Anticodon-binding domain"/>
    <property type="match status" value="1"/>
</dbReference>
<dbReference type="Gene3D" id="3.30.930.10">
    <property type="entry name" value="Bira Bifunctional Protein, Domain 2"/>
    <property type="match status" value="1"/>
</dbReference>
<dbReference type="HAMAP" id="MF_00127">
    <property type="entry name" value="His_tRNA_synth"/>
    <property type="match status" value="1"/>
</dbReference>
<dbReference type="InterPro" id="IPR006195">
    <property type="entry name" value="aa-tRNA-synth_II"/>
</dbReference>
<dbReference type="InterPro" id="IPR045864">
    <property type="entry name" value="aa-tRNA-synth_II/BPL/LPL"/>
</dbReference>
<dbReference type="InterPro" id="IPR004154">
    <property type="entry name" value="Anticodon-bd"/>
</dbReference>
<dbReference type="InterPro" id="IPR036621">
    <property type="entry name" value="Anticodon-bd_dom_sf"/>
</dbReference>
<dbReference type="InterPro" id="IPR015807">
    <property type="entry name" value="His-tRNA-ligase"/>
</dbReference>
<dbReference type="InterPro" id="IPR041715">
    <property type="entry name" value="HisRS-like_core"/>
</dbReference>
<dbReference type="InterPro" id="IPR004516">
    <property type="entry name" value="HisRS/HisZ"/>
</dbReference>
<dbReference type="InterPro" id="IPR033656">
    <property type="entry name" value="HisRS_anticodon"/>
</dbReference>
<dbReference type="NCBIfam" id="TIGR00442">
    <property type="entry name" value="hisS"/>
    <property type="match status" value="1"/>
</dbReference>
<dbReference type="PANTHER" id="PTHR43707:SF1">
    <property type="entry name" value="HISTIDINE--TRNA LIGASE, MITOCHONDRIAL-RELATED"/>
    <property type="match status" value="1"/>
</dbReference>
<dbReference type="PANTHER" id="PTHR43707">
    <property type="entry name" value="HISTIDYL-TRNA SYNTHETASE"/>
    <property type="match status" value="1"/>
</dbReference>
<dbReference type="Pfam" id="PF03129">
    <property type="entry name" value="HGTP_anticodon"/>
    <property type="match status" value="1"/>
</dbReference>
<dbReference type="Pfam" id="PF13393">
    <property type="entry name" value="tRNA-synt_His"/>
    <property type="match status" value="1"/>
</dbReference>
<dbReference type="PIRSF" id="PIRSF001549">
    <property type="entry name" value="His-tRNA_synth"/>
    <property type="match status" value="1"/>
</dbReference>
<dbReference type="SUPFAM" id="SSF52954">
    <property type="entry name" value="Class II aaRS ABD-related"/>
    <property type="match status" value="1"/>
</dbReference>
<dbReference type="SUPFAM" id="SSF55681">
    <property type="entry name" value="Class II aaRS and biotin synthetases"/>
    <property type="match status" value="1"/>
</dbReference>
<dbReference type="PROSITE" id="PS50862">
    <property type="entry name" value="AA_TRNA_LIGASE_II"/>
    <property type="match status" value="1"/>
</dbReference>
<reference key="1">
    <citation type="journal article" date="2014" name="Stand. Genomic Sci.">
        <title>Complete genome sequence of Burkholderia phymatum STM815(T), a broad host range and efficient nitrogen-fixing symbiont of Mimosa species.</title>
        <authorList>
            <person name="Moulin L."/>
            <person name="Klonowska A."/>
            <person name="Caroline B."/>
            <person name="Booth K."/>
            <person name="Vriezen J.A."/>
            <person name="Melkonian R."/>
            <person name="James E.K."/>
            <person name="Young J.P."/>
            <person name="Bena G."/>
            <person name="Hauser L."/>
            <person name="Land M."/>
            <person name="Kyrpides N."/>
            <person name="Bruce D."/>
            <person name="Chain P."/>
            <person name="Copeland A."/>
            <person name="Pitluck S."/>
            <person name="Woyke T."/>
            <person name="Lizotte-Waniewski M."/>
            <person name="Bristow J."/>
            <person name="Riley M."/>
        </authorList>
    </citation>
    <scope>NUCLEOTIDE SEQUENCE [LARGE SCALE GENOMIC DNA]</scope>
    <source>
        <strain>DSM 17167 / CIP 108236 / LMG 21445 / STM815</strain>
    </source>
</reference>